<accession>P17162</accession>
<gene>
    <name type="primary">ptsN</name>
</gene>
<feature type="chain" id="PRO_0000186695" description="Nitrogen regulatory protein">
    <location>
        <begin position="1"/>
        <end position="162"/>
    </location>
</feature>
<feature type="domain" description="PTS EIIA type-2" evidence="2">
    <location>
        <begin position="12"/>
        <end position="156"/>
    </location>
</feature>
<feature type="active site" description="Tele-phosphohistidine intermediate" evidence="2">
    <location>
        <position position="73"/>
    </location>
</feature>
<sequence>MINNDSALQLSNVLNQECTRSQVHCQSKKRALEIISELAAKQLGLSSQIVFEAILTREKMGSTGIGNGIAIPHGKLEEDTLRAVGVFVQLETPIAFDAIDNQPVDLLFALLVPADQTKTHLHTLSLVAKRLADKTICRRLRAAQSDEELYEIITEAGSNNEA</sequence>
<protein>
    <recommendedName>
        <fullName>Nitrogen regulatory protein</fullName>
    </recommendedName>
    <alternativeName>
        <fullName>Enzyme IIA-NTR</fullName>
    </alternativeName>
    <domain>
        <recommendedName>
            <fullName>Phosphotransferase enzyme IIA component</fullName>
        </recommendedName>
        <alternativeName>
            <fullName>PTS system EIIA component</fullName>
        </alternativeName>
    </domain>
</protein>
<dbReference type="EMBL" id="X16335">
    <property type="protein sequence ID" value="CAA34392.1"/>
    <property type="molecule type" value="Genomic_DNA"/>
</dbReference>
<dbReference type="PIR" id="S07661">
    <property type="entry name" value="S07661"/>
</dbReference>
<dbReference type="SMR" id="P17162"/>
<dbReference type="STRING" id="571.AB185_09960"/>
<dbReference type="eggNOG" id="COG1762">
    <property type="taxonomic scope" value="Bacteria"/>
</dbReference>
<dbReference type="GO" id="GO:0005737">
    <property type="term" value="C:cytoplasm"/>
    <property type="evidence" value="ECO:0007669"/>
    <property type="project" value="UniProtKB-SubCell"/>
</dbReference>
<dbReference type="GO" id="GO:0016301">
    <property type="term" value="F:kinase activity"/>
    <property type="evidence" value="ECO:0007669"/>
    <property type="project" value="UniProtKB-KW"/>
</dbReference>
<dbReference type="GO" id="GO:0030295">
    <property type="term" value="F:protein kinase activator activity"/>
    <property type="evidence" value="ECO:0007669"/>
    <property type="project" value="TreeGrafter"/>
</dbReference>
<dbReference type="GO" id="GO:0008982">
    <property type="term" value="F:protein-N(PI)-phosphohistidine-sugar phosphotransferase activity"/>
    <property type="evidence" value="ECO:0007669"/>
    <property type="project" value="InterPro"/>
</dbReference>
<dbReference type="GO" id="GO:0009401">
    <property type="term" value="P:phosphoenolpyruvate-dependent sugar phosphotransferase system"/>
    <property type="evidence" value="ECO:0007669"/>
    <property type="project" value="InterPro"/>
</dbReference>
<dbReference type="CDD" id="cd00211">
    <property type="entry name" value="PTS_IIA_fru"/>
    <property type="match status" value="1"/>
</dbReference>
<dbReference type="FunFam" id="3.40.930.10:FF:000003">
    <property type="entry name" value="PTS IIA-like nitrogen regulatory protein PtsN"/>
    <property type="match status" value="1"/>
</dbReference>
<dbReference type="Gene3D" id="3.40.930.10">
    <property type="entry name" value="Mannitol-specific EII, Chain A"/>
    <property type="match status" value="1"/>
</dbReference>
<dbReference type="InterPro" id="IPR016152">
    <property type="entry name" value="PTrfase/Anion_transptr"/>
</dbReference>
<dbReference type="InterPro" id="IPR002178">
    <property type="entry name" value="PTS_EIIA_type-2_dom"/>
</dbReference>
<dbReference type="InterPro" id="IPR006320">
    <property type="entry name" value="PTS_Nitro_regul"/>
</dbReference>
<dbReference type="InterPro" id="IPR051541">
    <property type="entry name" value="PTS_SugarTrans_NitroReg"/>
</dbReference>
<dbReference type="NCBIfam" id="TIGR01419">
    <property type="entry name" value="nitro_reg_IIA"/>
    <property type="match status" value="1"/>
</dbReference>
<dbReference type="NCBIfam" id="NF008145">
    <property type="entry name" value="PRK10896.1"/>
    <property type="match status" value="1"/>
</dbReference>
<dbReference type="PANTHER" id="PTHR47738:SF1">
    <property type="entry name" value="NITROGEN REGULATORY PROTEIN"/>
    <property type="match status" value="1"/>
</dbReference>
<dbReference type="PANTHER" id="PTHR47738">
    <property type="entry name" value="PTS SYSTEM FRUCTOSE-LIKE EIIA COMPONENT-RELATED"/>
    <property type="match status" value="1"/>
</dbReference>
<dbReference type="Pfam" id="PF00359">
    <property type="entry name" value="PTS_EIIA_2"/>
    <property type="match status" value="1"/>
</dbReference>
<dbReference type="SUPFAM" id="SSF55804">
    <property type="entry name" value="Phoshotransferase/anion transport protein"/>
    <property type="match status" value="1"/>
</dbReference>
<dbReference type="PROSITE" id="PS51094">
    <property type="entry name" value="PTS_EIIA_TYPE_2"/>
    <property type="match status" value="1"/>
</dbReference>
<dbReference type="PROSITE" id="PS00372">
    <property type="entry name" value="PTS_EIIA_TYPE_2_HIS"/>
    <property type="match status" value="1"/>
</dbReference>
<keyword id="KW-0963">Cytoplasm</keyword>
<keyword id="KW-0418">Kinase</keyword>
<keyword id="KW-0808">Transferase</keyword>
<organism>
    <name type="scientific">Klebsiella oxytoca</name>
    <dbReference type="NCBI Taxonomy" id="571"/>
    <lineage>
        <taxon>Bacteria</taxon>
        <taxon>Pseudomonadati</taxon>
        <taxon>Pseudomonadota</taxon>
        <taxon>Gammaproteobacteria</taxon>
        <taxon>Enterobacterales</taxon>
        <taxon>Enterobacteriaceae</taxon>
        <taxon>Klebsiella/Raoultella group</taxon>
        <taxon>Klebsiella</taxon>
    </lineage>
</organism>
<name>PTSN_KLEOX</name>
<reference key="1">
    <citation type="journal article" date="1989" name="Mol. Microbiol.">
        <title>Mutations in genes downstream of the rpoN gene (encoding sigma 54) of Klebsiella pneumoniae affect expression from sigma 54-dependent promoters.</title>
        <authorList>
            <person name="Merrick M.J."/>
            <person name="Coppard J.R."/>
        </authorList>
    </citation>
    <scope>NUCLEOTIDE SEQUENCE [GENOMIC DNA]</scope>
    <source>
        <strain>M5a1</strain>
    </source>
</reference>
<evidence type="ECO:0000250" key="1"/>
<evidence type="ECO:0000255" key="2">
    <source>
        <dbReference type="PROSITE-ProRule" id="PRU00417"/>
    </source>
</evidence>
<proteinExistence type="inferred from homology"/>
<comment type="function">
    <text evidence="1">Seems to have a role in regulating nitrogen assimilation.</text>
</comment>
<comment type="subcellular location">
    <subcellularLocation>
        <location>Cytoplasm</location>
    </subcellularLocation>
</comment>
<comment type="domain">
    <text>The PTS EIIA type-2 domain may serve a regulatory function, through its phosphorylation activity.</text>
</comment>